<protein>
    <recommendedName>
        <fullName>Mitogen-activated protein kinase 16</fullName>
        <shortName>AtMPK16</shortName>
        <shortName>MAP kinase 16</shortName>
        <ecNumber>2.7.11.24</ecNumber>
    </recommendedName>
</protein>
<organism>
    <name type="scientific">Arabidopsis thaliana</name>
    <name type="common">Mouse-ear cress</name>
    <dbReference type="NCBI Taxonomy" id="3702"/>
    <lineage>
        <taxon>Eukaryota</taxon>
        <taxon>Viridiplantae</taxon>
        <taxon>Streptophyta</taxon>
        <taxon>Embryophyta</taxon>
        <taxon>Tracheophyta</taxon>
        <taxon>Spermatophyta</taxon>
        <taxon>Magnoliopsida</taxon>
        <taxon>eudicotyledons</taxon>
        <taxon>Gunneridae</taxon>
        <taxon>Pentapetalae</taxon>
        <taxon>rosids</taxon>
        <taxon>malvids</taxon>
        <taxon>Brassicales</taxon>
        <taxon>Brassicaceae</taxon>
        <taxon>Camelineae</taxon>
        <taxon>Arabidopsis</taxon>
    </lineage>
</organism>
<reference key="1">
    <citation type="journal article" date="2000" name="Nature">
        <title>Sequence and analysis of chromosome 5 of the plant Arabidopsis thaliana.</title>
        <authorList>
            <person name="Tabata S."/>
            <person name="Kaneko T."/>
            <person name="Nakamura Y."/>
            <person name="Kotani H."/>
            <person name="Kato T."/>
            <person name="Asamizu E."/>
            <person name="Miyajima N."/>
            <person name="Sasamoto S."/>
            <person name="Kimura T."/>
            <person name="Hosouchi T."/>
            <person name="Kawashima K."/>
            <person name="Kohara M."/>
            <person name="Matsumoto M."/>
            <person name="Matsuno A."/>
            <person name="Muraki A."/>
            <person name="Nakayama S."/>
            <person name="Nakazaki N."/>
            <person name="Naruo K."/>
            <person name="Okumura S."/>
            <person name="Shinpo S."/>
            <person name="Takeuchi C."/>
            <person name="Wada T."/>
            <person name="Watanabe A."/>
            <person name="Yamada M."/>
            <person name="Yasuda M."/>
            <person name="Sato S."/>
            <person name="de la Bastide M."/>
            <person name="Huang E."/>
            <person name="Spiegel L."/>
            <person name="Gnoj L."/>
            <person name="O'Shaughnessy A."/>
            <person name="Preston R."/>
            <person name="Habermann K."/>
            <person name="Murray J."/>
            <person name="Johnson D."/>
            <person name="Rohlfing T."/>
            <person name="Nelson J."/>
            <person name="Stoneking T."/>
            <person name="Pepin K."/>
            <person name="Spieth J."/>
            <person name="Sekhon M."/>
            <person name="Armstrong J."/>
            <person name="Becker M."/>
            <person name="Belter E."/>
            <person name="Cordum H."/>
            <person name="Cordes M."/>
            <person name="Courtney L."/>
            <person name="Courtney W."/>
            <person name="Dante M."/>
            <person name="Du H."/>
            <person name="Edwards J."/>
            <person name="Fryman J."/>
            <person name="Haakensen B."/>
            <person name="Lamar E."/>
            <person name="Latreille P."/>
            <person name="Leonard S."/>
            <person name="Meyer R."/>
            <person name="Mulvaney E."/>
            <person name="Ozersky P."/>
            <person name="Riley A."/>
            <person name="Strowmatt C."/>
            <person name="Wagner-McPherson C."/>
            <person name="Wollam A."/>
            <person name="Yoakum M."/>
            <person name="Bell M."/>
            <person name="Dedhia N."/>
            <person name="Parnell L."/>
            <person name="Shah R."/>
            <person name="Rodriguez M."/>
            <person name="Hoon See L."/>
            <person name="Vil D."/>
            <person name="Baker J."/>
            <person name="Kirchoff K."/>
            <person name="Toth K."/>
            <person name="King L."/>
            <person name="Bahret A."/>
            <person name="Miller B."/>
            <person name="Marra M.A."/>
            <person name="Martienssen R."/>
            <person name="McCombie W.R."/>
            <person name="Wilson R.K."/>
            <person name="Murphy G."/>
            <person name="Bancroft I."/>
            <person name="Volckaert G."/>
            <person name="Wambutt R."/>
            <person name="Duesterhoeft A."/>
            <person name="Stiekema W."/>
            <person name="Pohl T."/>
            <person name="Entian K.-D."/>
            <person name="Terryn N."/>
            <person name="Hartley N."/>
            <person name="Bent E."/>
            <person name="Johnson S."/>
            <person name="Langham S.-A."/>
            <person name="McCullagh B."/>
            <person name="Robben J."/>
            <person name="Grymonprez B."/>
            <person name="Zimmermann W."/>
            <person name="Ramsperger U."/>
            <person name="Wedler H."/>
            <person name="Balke K."/>
            <person name="Wedler E."/>
            <person name="Peters S."/>
            <person name="van Staveren M."/>
            <person name="Dirkse W."/>
            <person name="Mooijman P."/>
            <person name="Klein Lankhorst R."/>
            <person name="Weitzenegger T."/>
            <person name="Bothe G."/>
            <person name="Rose M."/>
            <person name="Hauf J."/>
            <person name="Berneiser S."/>
            <person name="Hempel S."/>
            <person name="Feldpausch M."/>
            <person name="Lamberth S."/>
            <person name="Villarroel R."/>
            <person name="Gielen J."/>
            <person name="Ardiles W."/>
            <person name="Bents O."/>
            <person name="Lemcke K."/>
            <person name="Kolesov G."/>
            <person name="Mayer K.F.X."/>
            <person name="Rudd S."/>
            <person name="Schoof H."/>
            <person name="Schueller C."/>
            <person name="Zaccaria P."/>
            <person name="Mewes H.-W."/>
            <person name="Bevan M."/>
            <person name="Fransz P.F."/>
        </authorList>
    </citation>
    <scope>NUCLEOTIDE SEQUENCE [LARGE SCALE GENOMIC DNA]</scope>
    <source>
        <strain>cv. Columbia</strain>
    </source>
</reference>
<reference key="2">
    <citation type="journal article" date="2017" name="Plant J.">
        <title>Araport11: a complete reannotation of the Arabidopsis thaliana reference genome.</title>
        <authorList>
            <person name="Cheng C.Y."/>
            <person name="Krishnakumar V."/>
            <person name="Chan A.P."/>
            <person name="Thibaud-Nissen F."/>
            <person name="Schobel S."/>
            <person name="Town C.D."/>
        </authorList>
    </citation>
    <scope>GENOME REANNOTATION</scope>
    <source>
        <strain>cv. Columbia</strain>
    </source>
</reference>
<reference key="3">
    <citation type="journal article" date="2003" name="Science">
        <title>Empirical analysis of transcriptional activity in the Arabidopsis genome.</title>
        <authorList>
            <person name="Yamada K."/>
            <person name="Lim J."/>
            <person name="Dale J.M."/>
            <person name="Chen H."/>
            <person name="Shinn P."/>
            <person name="Palm C.J."/>
            <person name="Southwick A.M."/>
            <person name="Wu H.C."/>
            <person name="Kim C.J."/>
            <person name="Nguyen M."/>
            <person name="Pham P.K."/>
            <person name="Cheuk R.F."/>
            <person name="Karlin-Newmann G."/>
            <person name="Liu S.X."/>
            <person name="Lam B."/>
            <person name="Sakano H."/>
            <person name="Wu T."/>
            <person name="Yu G."/>
            <person name="Miranda M."/>
            <person name="Quach H.L."/>
            <person name="Tripp M."/>
            <person name="Chang C.H."/>
            <person name="Lee J.M."/>
            <person name="Toriumi M.J."/>
            <person name="Chan M.M."/>
            <person name="Tang C.C."/>
            <person name="Onodera C.S."/>
            <person name="Deng J.M."/>
            <person name="Akiyama K."/>
            <person name="Ansari Y."/>
            <person name="Arakawa T."/>
            <person name="Banh J."/>
            <person name="Banno F."/>
            <person name="Bowser L."/>
            <person name="Brooks S.Y."/>
            <person name="Carninci P."/>
            <person name="Chao Q."/>
            <person name="Choy N."/>
            <person name="Enju A."/>
            <person name="Goldsmith A.D."/>
            <person name="Gurjal M."/>
            <person name="Hansen N.F."/>
            <person name="Hayashizaki Y."/>
            <person name="Johnson-Hopson C."/>
            <person name="Hsuan V.W."/>
            <person name="Iida K."/>
            <person name="Karnes M."/>
            <person name="Khan S."/>
            <person name="Koesema E."/>
            <person name="Ishida J."/>
            <person name="Jiang P.X."/>
            <person name="Jones T."/>
            <person name="Kawai J."/>
            <person name="Kamiya A."/>
            <person name="Meyers C."/>
            <person name="Nakajima M."/>
            <person name="Narusaka M."/>
            <person name="Seki M."/>
            <person name="Sakurai T."/>
            <person name="Satou M."/>
            <person name="Tamse R."/>
            <person name="Vaysberg M."/>
            <person name="Wallender E.K."/>
            <person name="Wong C."/>
            <person name="Yamamura Y."/>
            <person name="Yuan S."/>
            <person name="Shinozaki K."/>
            <person name="Davis R.W."/>
            <person name="Theologis A."/>
            <person name="Ecker J.R."/>
        </authorList>
    </citation>
    <scope>NUCLEOTIDE SEQUENCE [LARGE SCALE MRNA]</scope>
    <source>
        <strain>cv. Columbia</strain>
    </source>
</reference>
<reference key="4">
    <citation type="journal article" date="2002" name="Trends Plant Sci.">
        <title>Mitogen-activated protein kinase cascades in plants: a new nomenclature.</title>
        <authorList>
            <consortium name="MAPK group"/>
        </authorList>
    </citation>
    <scope>GENE FAMILY</scope>
    <scope>NOMENCLATURE</scope>
</reference>
<reference key="5">
    <citation type="journal article" date="2006" name="Trends Plant Sci.">
        <title>Ancient signals: comparative genomics of plant MAPK and MAPKK gene families.</title>
        <authorList>
            <person name="Hamel L.P."/>
            <person name="Nicole M.C."/>
            <person name="Sritubtim S."/>
            <person name="Morency M.J."/>
            <person name="Ellis M."/>
            <person name="Ehlting J."/>
            <person name="Beaudoin N."/>
            <person name="Barbazuk B."/>
            <person name="Klessig D."/>
            <person name="Lee J."/>
            <person name="Martin G."/>
            <person name="Mundy J."/>
            <person name="Ohashi Y."/>
            <person name="Scheel D."/>
            <person name="Sheen J."/>
            <person name="Xing T."/>
            <person name="Zhang S."/>
            <person name="Seguin A."/>
            <person name="Ellis B.E."/>
        </authorList>
    </citation>
    <scope>GENE FAMILY</scope>
</reference>
<proteinExistence type="evidence at transcript level"/>
<evidence type="ECO:0000250" key="1"/>
<evidence type="ECO:0000250" key="2">
    <source>
        <dbReference type="UniProtKB" id="Q39026"/>
    </source>
</evidence>
<evidence type="ECO:0000255" key="3">
    <source>
        <dbReference type="PROSITE-ProRule" id="PRU00159"/>
    </source>
</evidence>
<evidence type="ECO:0000256" key="4">
    <source>
        <dbReference type="SAM" id="MobiDB-lite"/>
    </source>
</evidence>
<evidence type="ECO:0000305" key="5"/>
<keyword id="KW-0067">ATP-binding</keyword>
<keyword id="KW-0418">Kinase</keyword>
<keyword id="KW-0547">Nucleotide-binding</keyword>
<keyword id="KW-0597">Phosphoprotein</keyword>
<keyword id="KW-1185">Reference proteome</keyword>
<keyword id="KW-0723">Serine/threonine-protein kinase</keyword>
<keyword id="KW-0808">Transferase</keyword>
<accession>Q8W4J2</accession>
<dbReference type="EC" id="2.7.11.24"/>
<dbReference type="EMBL" id="AC068809">
    <property type="status" value="NOT_ANNOTATED_CDS"/>
    <property type="molecule type" value="Genomic_DNA"/>
</dbReference>
<dbReference type="EMBL" id="CP002688">
    <property type="protein sequence ID" value="AED92639.1"/>
    <property type="molecule type" value="Genomic_DNA"/>
</dbReference>
<dbReference type="EMBL" id="AY062529">
    <property type="protein sequence ID" value="AAL32607.1"/>
    <property type="molecule type" value="mRNA"/>
</dbReference>
<dbReference type="EMBL" id="BT000128">
    <property type="protein sequence ID" value="AAN15447.1"/>
    <property type="molecule type" value="mRNA"/>
</dbReference>
<dbReference type="RefSeq" id="NP_197402.1">
    <property type="nucleotide sequence ID" value="NM_121906.4"/>
</dbReference>
<dbReference type="SMR" id="Q8W4J2"/>
<dbReference type="BioGRID" id="17295">
    <property type="interactions" value="71"/>
</dbReference>
<dbReference type="FunCoup" id="Q8W4J2">
    <property type="interactions" value="992"/>
</dbReference>
<dbReference type="IntAct" id="Q8W4J2">
    <property type="interactions" value="1"/>
</dbReference>
<dbReference type="STRING" id="3702.Q8W4J2"/>
<dbReference type="iPTMnet" id="Q8W4J2"/>
<dbReference type="PaxDb" id="3702-AT5G19010.1"/>
<dbReference type="ProteomicsDB" id="250950"/>
<dbReference type="EnsemblPlants" id="AT5G19010.1">
    <property type="protein sequence ID" value="AT5G19010.1"/>
    <property type="gene ID" value="AT5G19010"/>
</dbReference>
<dbReference type="GeneID" id="832019"/>
<dbReference type="Gramene" id="AT5G19010.1">
    <property type="protein sequence ID" value="AT5G19010.1"/>
    <property type="gene ID" value="AT5G19010"/>
</dbReference>
<dbReference type="KEGG" id="ath:AT5G19010"/>
<dbReference type="Araport" id="AT5G19010"/>
<dbReference type="TAIR" id="AT5G19010">
    <property type="gene designation" value="MPK16"/>
</dbReference>
<dbReference type="eggNOG" id="KOG0660">
    <property type="taxonomic scope" value="Eukaryota"/>
</dbReference>
<dbReference type="HOGENOM" id="CLU_000288_181_5_1"/>
<dbReference type="InParanoid" id="Q8W4J2"/>
<dbReference type="OMA" id="DRNAQMP"/>
<dbReference type="OrthoDB" id="2396at2759"/>
<dbReference type="PhylomeDB" id="Q8W4J2"/>
<dbReference type="PRO" id="PR:Q8W4J2"/>
<dbReference type="Proteomes" id="UP000006548">
    <property type="component" value="Chromosome 5"/>
</dbReference>
<dbReference type="ExpressionAtlas" id="Q8W4J2">
    <property type="expression patterns" value="baseline and differential"/>
</dbReference>
<dbReference type="GO" id="GO:0000325">
    <property type="term" value="C:plant-type vacuole"/>
    <property type="evidence" value="ECO:0007005"/>
    <property type="project" value="TAIR"/>
</dbReference>
<dbReference type="GO" id="GO:0005524">
    <property type="term" value="F:ATP binding"/>
    <property type="evidence" value="ECO:0007669"/>
    <property type="project" value="UniProtKB-KW"/>
</dbReference>
<dbReference type="GO" id="GO:0004707">
    <property type="term" value="F:MAP kinase activity"/>
    <property type="evidence" value="ECO:0000250"/>
    <property type="project" value="TAIR"/>
</dbReference>
<dbReference type="GO" id="GO:0106310">
    <property type="term" value="F:protein serine kinase activity"/>
    <property type="evidence" value="ECO:0007669"/>
    <property type="project" value="RHEA"/>
</dbReference>
<dbReference type="CDD" id="cd07859">
    <property type="entry name" value="STKc_TDY_MAPK"/>
    <property type="match status" value="1"/>
</dbReference>
<dbReference type="FunFam" id="1.10.510.10:FF:000017">
    <property type="entry name" value="Mitogen-activated protein kinase"/>
    <property type="match status" value="1"/>
</dbReference>
<dbReference type="FunFam" id="3.30.200.20:FF:000046">
    <property type="entry name" value="Mitogen-activated protein kinase"/>
    <property type="match status" value="1"/>
</dbReference>
<dbReference type="Gene3D" id="3.30.200.20">
    <property type="entry name" value="Phosphorylase Kinase, domain 1"/>
    <property type="match status" value="1"/>
</dbReference>
<dbReference type="Gene3D" id="1.10.510.10">
    <property type="entry name" value="Transferase(Phosphotransferase) domain 1"/>
    <property type="match status" value="1"/>
</dbReference>
<dbReference type="InterPro" id="IPR011009">
    <property type="entry name" value="Kinase-like_dom_sf"/>
</dbReference>
<dbReference type="InterPro" id="IPR050117">
    <property type="entry name" value="MAP_kinase"/>
</dbReference>
<dbReference type="InterPro" id="IPR003527">
    <property type="entry name" value="MAP_kinase_CS"/>
</dbReference>
<dbReference type="InterPro" id="IPR000719">
    <property type="entry name" value="Prot_kinase_dom"/>
</dbReference>
<dbReference type="InterPro" id="IPR017441">
    <property type="entry name" value="Protein_kinase_ATP_BS"/>
</dbReference>
<dbReference type="PANTHER" id="PTHR24055">
    <property type="entry name" value="MITOGEN-ACTIVATED PROTEIN KINASE"/>
    <property type="match status" value="1"/>
</dbReference>
<dbReference type="Pfam" id="PF00069">
    <property type="entry name" value="Pkinase"/>
    <property type="match status" value="1"/>
</dbReference>
<dbReference type="SMART" id="SM00220">
    <property type="entry name" value="S_TKc"/>
    <property type="match status" value="1"/>
</dbReference>
<dbReference type="SUPFAM" id="SSF56112">
    <property type="entry name" value="Protein kinase-like (PK-like)"/>
    <property type="match status" value="1"/>
</dbReference>
<dbReference type="PROSITE" id="PS01351">
    <property type="entry name" value="MAPK"/>
    <property type="match status" value="1"/>
</dbReference>
<dbReference type="PROSITE" id="PS00107">
    <property type="entry name" value="PROTEIN_KINASE_ATP"/>
    <property type="match status" value="1"/>
</dbReference>
<dbReference type="PROSITE" id="PS50011">
    <property type="entry name" value="PROTEIN_KINASE_DOM"/>
    <property type="match status" value="1"/>
</dbReference>
<sequence>MQPDHRKKSSVEVDFFTEYGEGSRYRIEEVIGKGSYGVVCSAYDTHTGEKVAIKKINDIFEHVSDATRILREIKLLRLLRHPDIVEIKHILLPPSRREFRDIYVVFELMESDLHQVIKANDDLTPEHYQFFLYQLLRGLKYIHTANVFHRDLKPKNILANADCKLKICDFGLARVAFNDTPTAIFWTDYVATRWYRAPELCGSFFSKYTPAIDIWSIGCIFAELLTGKPLFPGKNVVHQLDLMTDMLGTPSAEAIGRVRNEKARRYLSSMRKKKPIPFSHKFPHTDPLALRLLEKMLSFEPKDRPTAEEALADVYFKGLAKVEREPSAQPVTKLEFEFERRRITKEDVRELIYRESLEYHPKMLKEYLDGSEPTNFMYPSAVEHFKKQFAYLEEHYKNGTSHNPPERQQHASLPRACVLYSDNNHPVAQQSSAEVTDGLSKCSIRDERPRGADRNAQMPMSRIPINVPQTIQGAAVARPGKVVGSVLRYNNCGAATGVEALEQQQRRMVRNPAAASQYPKRTQPCKSNRGDEDCATAAEGPSRLKPNTQYIPQKVSAAQDTAMSRWY</sequence>
<gene>
    <name type="primary">MPK16</name>
    <name type="ordered locus">At5g19010</name>
    <name type="ORF">T16G12.50</name>
</gene>
<name>MPK16_ARATH</name>
<feature type="chain" id="PRO_0000245816" description="Mitogen-activated protein kinase 16">
    <location>
        <begin position="1"/>
        <end position="567"/>
    </location>
</feature>
<feature type="domain" description="Protein kinase" evidence="3">
    <location>
        <begin position="25"/>
        <end position="316"/>
    </location>
</feature>
<feature type="region of interest" description="Disordered" evidence="4">
    <location>
        <begin position="428"/>
        <end position="455"/>
    </location>
</feature>
<feature type="region of interest" description="Disordered" evidence="4">
    <location>
        <begin position="512"/>
        <end position="567"/>
    </location>
</feature>
<feature type="short sequence motif" description="TXY">
    <location>
        <begin position="187"/>
        <end position="189"/>
    </location>
</feature>
<feature type="compositionally biased region" description="Basic and acidic residues" evidence="4">
    <location>
        <begin position="443"/>
        <end position="453"/>
    </location>
</feature>
<feature type="compositionally biased region" description="Polar residues" evidence="4">
    <location>
        <begin position="545"/>
        <end position="567"/>
    </location>
</feature>
<feature type="active site" description="Proton acceptor" evidence="3">
    <location>
        <position position="151"/>
    </location>
</feature>
<feature type="binding site" evidence="3">
    <location>
        <begin position="31"/>
        <end position="39"/>
    </location>
    <ligand>
        <name>ATP</name>
        <dbReference type="ChEBI" id="CHEBI:30616"/>
    </ligand>
</feature>
<feature type="binding site" evidence="3">
    <location>
        <position position="54"/>
    </location>
    <ligand>
        <name>ATP</name>
        <dbReference type="ChEBI" id="CHEBI:30616"/>
    </ligand>
</feature>
<feature type="modified residue" description="Phosphothreonine" evidence="2">
    <location>
        <position position="187"/>
    </location>
</feature>
<feature type="modified residue" description="Phosphotyrosine" evidence="2">
    <location>
        <position position="189"/>
    </location>
</feature>
<feature type="modified residue" description="Phosphothreonine" evidence="2">
    <location>
        <position position="192"/>
    </location>
</feature>
<feature type="sequence conflict" description="In Ref. 3; AAL32607/AAN15447." evidence="5" ref="3">
    <original>K</original>
    <variation>R</variation>
    <location>
        <position position="397"/>
    </location>
</feature>
<comment type="catalytic activity">
    <reaction>
        <text>L-seryl-[protein] + ATP = O-phospho-L-seryl-[protein] + ADP + H(+)</text>
        <dbReference type="Rhea" id="RHEA:17989"/>
        <dbReference type="Rhea" id="RHEA-COMP:9863"/>
        <dbReference type="Rhea" id="RHEA-COMP:11604"/>
        <dbReference type="ChEBI" id="CHEBI:15378"/>
        <dbReference type="ChEBI" id="CHEBI:29999"/>
        <dbReference type="ChEBI" id="CHEBI:30616"/>
        <dbReference type="ChEBI" id="CHEBI:83421"/>
        <dbReference type="ChEBI" id="CHEBI:456216"/>
        <dbReference type="EC" id="2.7.11.24"/>
    </reaction>
</comment>
<comment type="catalytic activity">
    <reaction>
        <text>L-threonyl-[protein] + ATP = O-phospho-L-threonyl-[protein] + ADP + H(+)</text>
        <dbReference type="Rhea" id="RHEA:46608"/>
        <dbReference type="Rhea" id="RHEA-COMP:11060"/>
        <dbReference type="Rhea" id="RHEA-COMP:11605"/>
        <dbReference type="ChEBI" id="CHEBI:15378"/>
        <dbReference type="ChEBI" id="CHEBI:30013"/>
        <dbReference type="ChEBI" id="CHEBI:30616"/>
        <dbReference type="ChEBI" id="CHEBI:61977"/>
        <dbReference type="ChEBI" id="CHEBI:456216"/>
        <dbReference type="EC" id="2.7.11.24"/>
    </reaction>
</comment>
<comment type="activity regulation">
    <text evidence="1">Activated by threonine and tyrosine phosphorylation.</text>
</comment>
<comment type="domain">
    <text>The TXY motif contains the threonine and tyrosine residues whose phosphorylation activates the MAP kinases.</text>
</comment>
<comment type="PTM">
    <text evidence="1">Dually phosphorylated on Thr-187 and Tyr-189, which activates the enzyme.</text>
</comment>
<comment type="similarity">
    <text evidence="5">Belongs to the protein kinase superfamily. CMGC Ser/Thr protein kinase family. MAP kinase subfamily.</text>
</comment>